<gene>
    <name type="primary">nhr-19</name>
    <name type="ORF">E02H1.7</name>
</gene>
<reference key="1">
    <citation type="journal article" date="1998" name="Science">
        <title>Genome sequence of the nematode C. elegans: a platform for investigating biology.</title>
        <authorList>
            <consortium name="The C. elegans sequencing consortium"/>
        </authorList>
    </citation>
    <scope>NUCLEOTIDE SEQUENCE [LARGE SCALE GENOMIC DNA]</scope>
    <source>
        <strain>Bristol N2</strain>
    </source>
</reference>
<keyword id="KW-0238">DNA-binding</keyword>
<keyword id="KW-0479">Metal-binding</keyword>
<keyword id="KW-0539">Nucleus</keyword>
<keyword id="KW-0675">Receptor</keyword>
<keyword id="KW-1185">Reference proteome</keyword>
<keyword id="KW-0804">Transcription</keyword>
<keyword id="KW-0805">Transcription regulation</keyword>
<keyword id="KW-0862">Zinc</keyword>
<keyword id="KW-0863">Zinc-finger</keyword>
<comment type="function">
    <text>Orphan nuclear receptor.</text>
</comment>
<comment type="interaction">
    <interactant intactId="EBI-318797">
        <id>Q09528</id>
    </interactant>
    <interactant intactId="EBI-318820">
        <id>O45666</id>
        <label>nhr-49</label>
    </interactant>
    <organismsDiffer>false</organismsDiffer>
    <experiments>4</experiments>
</comment>
<comment type="subcellular location">
    <subcellularLocation>
        <location evidence="1">Nucleus</location>
    </subcellularLocation>
</comment>
<comment type="similarity">
    <text evidence="3">Belongs to the nuclear hormone receptor family.</text>
</comment>
<dbReference type="EMBL" id="Z47075">
    <property type="protein sequence ID" value="CAA87381.2"/>
    <property type="molecule type" value="Genomic_DNA"/>
</dbReference>
<dbReference type="EMBL" id="Z47356">
    <property type="protein sequence ID" value="CAA87381.2"/>
    <property type="status" value="JOINED"/>
    <property type="molecule type" value="Genomic_DNA"/>
</dbReference>
<dbReference type="PIR" id="T20416">
    <property type="entry name" value="T20416"/>
</dbReference>
<dbReference type="RefSeq" id="NP_496066.2">
    <property type="nucleotide sequence ID" value="NM_063665.6"/>
</dbReference>
<dbReference type="SMR" id="Q09528"/>
<dbReference type="BioGRID" id="39835">
    <property type="interactions" value="4"/>
</dbReference>
<dbReference type="FunCoup" id="Q09528">
    <property type="interactions" value="2"/>
</dbReference>
<dbReference type="IntAct" id="Q09528">
    <property type="interactions" value="3"/>
</dbReference>
<dbReference type="STRING" id="6239.E02H1.7.1"/>
<dbReference type="PaxDb" id="6239-E02H1.7"/>
<dbReference type="PeptideAtlas" id="Q09528"/>
<dbReference type="EnsemblMetazoa" id="E02H1.7.1">
    <property type="protein sequence ID" value="E02H1.7.1"/>
    <property type="gene ID" value="WBGene00003618"/>
</dbReference>
<dbReference type="EnsemblMetazoa" id="E02H1.7.2">
    <property type="protein sequence ID" value="E02H1.7.2"/>
    <property type="gene ID" value="WBGene00003618"/>
</dbReference>
<dbReference type="GeneID" id="174512"/>
<dbReference type="KEGG" id="cel:CELE_E02H1.7"/>
<dbReference type="UCSC" id="E02H1.7">
    <property type="organism name" value="c. elegans"/>
</dbReference>
<dbReference type="AGR" id="WB:WBGene00003618"/>
<dbReference type="CTD" id="174512"/>
<dbReference type="WormBase" id="E02H1.7">
    <property type="protein sequence ID" value="CE30271"/>
    <property type="gene ID" value="WBGene00003618"/>
    <property type="gene designation" value="nhr-19"/>
</dbReference>
<dbReference type="eggNOG" id="KOG3575">
    <property type="taxonomic scope" value="Eukaryota"/>
</dbReference>
<dbReference type="GeneTree" id="ENSGT00970000196300"/>
<dbReference type="HOGENOM" id="CLU_007368_3_3_1"/>
<dbReference type="InParanoid" id="Q09528"/>
<dbReference type="OMA" id="ITNGTCM"/>
<dbReference type="OrthoDB" id="5771769at2759"/>
<dbReference type="PhylomeDB" id="Q09528"/>
<dbReference type="PRO" id="PR:Q09528"/>
<dbReference type="Proteomes" id="UP000001940">
    <property type="component" value="Chromosome II"/>
</dbReference>
<dbReference type="Bgee" id="WBGene00003618">
    <property type="expression patterns" value="Expressed in larva and 3 other cell types or tissues"/>
</dbReference>
<dbReference type="GO" id="GO:0005634">
    <property type="term" value="C:nucleus"/>
    <property type="evidence" value="ECO:0007669"/>
    <property type="project" value="UniProtKB-SubCell"/>
</dbReference>
<dbReference type="GO" id="GO:0003700">
    <property type="term" value="F:DNA-binding transcription factor activity"/>
    <property type="evidence" value="ECO:0007669"/>
    <property type="project" value="InterPro"/>
</dbReference>
<dbReference type="GO" id="GO:0000978">
    <property type="term" value="F:RNA polymerase II cis-regulatory region sequence-specific DNA binding"/>
    <property type="evidence" value="ECO:0007669"/>
    <property type="project" value="InterPro"/>
</dbReference>
<dbReference type="GO" id="GO:0008270">
    <property type="term" value="F:zinc ion binding"/>
    <property type="evidence" value="ECO:0007669"/>
    <property type="project" value="UniProtKB-KW"/>
</dbReference>
<dbReference type="CDD" id="cd06960">
    <property type="entry name" value="NR_DBD_HNF4A"/>
    <property type="match status" value="1"/>
</dbReference>
<dbReference type="CDD" id="cd06157">
    <property type="entry name" value="NR_LBD"/>
    <property type="match status" value="1"/>
</dbReference>
<dbReference type="FunFam" id="3.30.50.10:FF:000030">
    <property type="entry name" value="Nuclear Hormone Receptor family"/>
    <property type="match status" value="1"/>
</dbReference>
<dbReference type="Gene3D" id="3.30.50.10">
    <property type="entry name" value="Erythroid Transcription Factor GATA-1, subunit A"/>
    <property type="match status" value="1"/>
</dbReference>
<dbReference type="Gene3D" id="1.10.565.10">
    <property type="entry name" value="Retinoid X Receptor"/>
    <property type="match status" value="1"/>
</dbReference>
<dbReference type="InterPro" id="IPR049636">
    <property type="entry name" value="HNF4-like_DBD"/>
</dbReference>
<dbReference type="InterPro" id="IPR035500">
    <property type="entry name" value="NHR-like_dom_sf"/>
</dbReference>
<dbReference type="InterPro" id="IPR000536">
    <property type="entry name" value="Nucl_hrmn_rcpt_lig-bd"/>
</dbReference>
<dbReference type="InterPro" id="IPR001723">
    <property type="entry name" value="Nuclear_hrmn_rcpt"/>
</dbReference>
<dbReference type="InterPro" id="IPR001628">
    <property type="entry name" value="Znf_hrmn_rcpt"/>
</dbReference>
<dbReference type="InterPro" id="IPR013088">
    <property type="entry name" value="Znf_NHR/GATA"/>
</dbReference>
<dbReference type="PANTHER" id="PTHR46587">
    <property type="entry name" value="NUCLEAR HORMONE RECEPTOR FAMILY"/>
    <property type="match status" value="1"/>
</dbReference>
<dbReference type="PANTHER" id="PTHR46587:SF7">
    <property type="entry name" value="NUCLEAR HORMONE RECEPTOR FAMILY MEMBER NHR-19"/>
    <property type="match status" value="1"/>
</dbReference>
<dbReference type="Pfam" id="PF00104">
    <property type="entry name" value="Hormone_recep"/>
    <property type="match status" value="1"/>
</dbReference>
<dbReference type="Pfam" id="PF00105">
    <property type="entry name" value="zf-C4"/>
    <property type="match status" value="1"/>
</dbReference>
<dbReference type="PRINTS" id="PR00398">
    <property type="entry name" value="STRDHORMONER"/>
</dbReference>
<dbReference type="PRINTS" id="PR00047">
    <property type="entry name" value="STROIDFINGER"/>
</dbReference>
<dbReference type="SMART" id="SM00430">
    <property type="entry name" value="HOLI"/>
    <property type="match status" value="1"/>
</dbReference>
<dbReference type="SMART" id="SM00399">
    <property type="entry name" value="ZnF_C4"/>
    <property type="match status" value="1"/>
</dbReference>
<dbReference type="SUPFAM" id="SSF57716">
    <property type="entry name" value="Glucocorticoid receptor-like (DNA-binding domain)"/>
    <property type="match status" value="1"/>
</dbReference>
<dbReference type="SUPFAM" id="SSF48508">
    <property type="entry name" value="Nuclear receptor ligand-binding domain"/>
    <property type="match status" value="1"/>
</dbReference>
<dbReference type="PROSITE" id="PS51843">
    <property type="entry name" value="NR_LBD"/>
    <property type="match status" value="1"/>
</dbReference>
<dbReference type="PROSITE" id="PS00031">
    <property type="entry name" value="NUCLEAR_REC_DBD_1"/>
    <property type="match status" value="1"/>
</dbReference>
<dbReference type="PROSITE" id="PS51030">
    <property type="entry name" value="NUCLEAR_REC_DBD_2"/>
    <property type="match status" value="1"/>
</dbReference>
<organism>
    <name type="scientific">Caenorhabditis elegans</name>
    <dbReference type="NCBI Taxonomy" id="6239"/>
    <lineage>
        <taxon>Eukaryota</taxon>
        <taxon>Metazoa</taxon>
        <taxon>Ecdysozoa</taxon>
        <taxon>Nematoda</taxon>
        <taxon>Chromadorea</taxon>
        <taxon>Rhabditida</taxon>
        <taxon>Rhabditina</taxon>
        <taxon>Rhabditomorpha</taxon>
        <taxon>Rhabditoidea</taxon>
        <taxon>Rhabditidae</taxon>
        <taxon>Peloderinae</taxon>
        <taxon>Caenorhabditis</taxon>
    </lineage>
</organism>
<name>NHR19_CAEEL</name>
<proteinExistence type="evidence at protein level"/>
<sequence length="477" mass="53052">MTTVFQTMPTFLAGLNIANFGAATSQFPKLESEITAPRQSMSTAFQKMPTFTSVISVPSIAAIAPQMPSVKPEKGVIGQCLICGEPSTGKHYGIVACLGCKTFFRRAVVQRQDTECKREKPCDVTTMARKACRACRYRKCLESGMSKEALQPRRDLIGCRRIRSRPSCSTSTPTPPRPQVEDKSQYLTLLENLTTIDDRLRKKKLEVVASRQAAVDLAVLAKQGCMSITDTSGPSTSRYVPGGTSPNGGDHKMMVMLGTDISVSTQSELLMMLEWTRTLPVFASLPVQDRSVILKRFAVHCLILEHGYYTAQANIDDVWLITNGTCMPRNVEKLEEGCKISVSADRRWRQEKLYKQMTDCCIDEVATPLRNLKLSPQEIVVIKIIVLFNCGCSSDYSEITEASRRIVLTFRNKVVSALFAYYESVGLQNYAERFGNLVLMLSGVSSAASSMLEAYQVMRLFKITPFDPLSQELLFNI</sequence>
<protein>
    <recommendedName>
        <fullName>Nuclear hormone receptor family member nhr-19</fullName>
    </recommendedName>
</protein>
<feature type="chain" id="PRO_0000053770" description="Nuclear hormone receptor family member nhr-19">
    <location>
        <begin position="1"/>
        <end position="477"/>
    </location>
</feature>
<feature type="domain" description="NR LBD" evidence="2">
    <location>
        <begin position="216"/>
        <end position="477"/>
    </location>
</feature>
<feature type="DNA-binding region" description="Nuclear receptor" evidence="1">
    <location>
        <begin position="77"/>
        <end position="152"/>
    </location>
</feature>
<feature type="zinc finger region" description="NR C4-type" evidence="1">
    <location>
        <begin position="80"/>
        <end position="100"/>
    </location>
</feature>
<feature type="zinc finger region" description="NR C4-type" evidence="1">
    <location>
        <begin position="116"/>
        <end position="140"/>
    </location>
</feature>
<evidence type="ECO:0000255" key="1">
    <source>
        <dbReference type="PROSITE-ProRule" id="PRU00407"/>
    </source>
</evidence>
<evidence type="ECO:0000255" key="2">
    <source>
        <dbReference type="PROSITE-ProRule" id="PRU01189"/>
    </source>
</evidence>
<evidence type="ECO:0000305" key="3"/>
<accession>Q09528</accession>
<accession>Q8T3C7</accession>